<feature type="chain" id="PRO_1000192960" description="Peptidyl-tRNA hydrolase">
    <location>
        <begin position="1"/>
        <end position="199"/>
    </location>
</feature>
<feature type="active site" description="Proton acceptor" evidence="1">
    <location>
        <position position="23"/>
    </location>
</feature>
<feature type="binding site" evidence="1">
    <location>
        <position position="18"/>
    </location>
    <ligand>
        <name>tRNA</name>
        <dbReference type="ChEBI" id="CHEBI:17843"/>
    </ligand>
</feature>
<feature type="binding site" evidence="1">
    <location>
        <position position="72"/>
    </location>
    <ligand>
        <name>tRNA</name>
        <dbReference type="ChEBI" id="CHEBI:17843"/>
    </ligand>
</feature>
<feature type="binding site" evidence="1">
    <location>
        <position position="74"/>
    </location>
    <ligand>
        <name>tRNA</name>
        <dbReference type="ChEBI" id="CHEBI:17843"/>
    </ligand>
</feature>
<feature type="binding site" evidence="1">
    <location>
        <position position="120"/>
    </location>
    <ligand>
        <name>tRNA</name>
        <dbReference type="ChEBI" id="CHEBI:17843"/>
    </ligand>
</feature>
<feature type="site" description="Discriminates between blocked and unblocked aminoacyl-tRNA" evidence="1">
    <location>
        <position position="13"/>
    </location>
</feature>
<feature type="site" description="Stabilizes the basic form of H active site to accept a proton" evidence="1">
    <location>
        <position position="99"/>
    </location>
</feature>
<organism>
    <name type="scientific">Bifidobacterium longum subsp. infantis (strain ATCC 15697 / DSM 20088 / JCM 1222 / NCTC 11817 / S12)</name>
    <dbReference type="NCBI Taxonomy" id="391904"/>
    <lineage>
        <taxon>Bacteria</taxon>
        <taxon>Bacillati</taxon>
        <taxon>Actinomycetota</taxon>
        <taxon>Actinomycetes</taxon>
        <taxon>Bifidobacteriales</taxon>
        <taxon>Bifidobacteriaceae</taxon>
        <taxon>Bifidobacterium</taxon>
    </lineage>
</organism>
<protein>
    <recommendedName>
        <fullName evidence="1">Peptidyl-tRNA hydrolase</fullName>
        <shortName evidence="1">Pth</shortName>
        <ecNumber evidence="1">3.1.1.29</ecNumber>
    </recommendedName>
</protein>
<reference key="1">
    <citation type="journal article" date="2008" name="Proc. Natl. Acad. Sci. U.S.A.">
        <title>The genome sequence of Bifidobacterium longum subsp. infantis reveals adaptations for milk utilization within the infant microbiome.</title>
        <authorList>
            <person name="Sela D.A."/>
            <person name="Chapman J."/>
            <person name="Adeuya A."/>
            <person name="Kim J.H."/>
            <person name="Chen F."/>
            <person name="Whitehead T.R."/>
            <person name="Lapidus A."/>
            <person name="Rokhsar D.S."/>
            <person name="Lebrilla C.B."/>
            <person name="German J.B."/>
            <person name="Price N.P."/>
            <person name="Richardson P.M."/>
            <person name="Mills D.A."/>
        </authorList>
    </citation>
    <scope>NUCLEOTIDE SEQUENCE [LARGE SCALE GENOMIC DNA]</scope>
    <source>
        <strain>ATCC 15697 / DSM 20088 / JCM 1222 / NCTC 11817 / S12</strain>
    </source>
</reference>
<reference key="2">
    <citation type="journal article" date="2011" name="Nature">
        <title>Bifidobacteria can protect from enteropathogenic infection through production of acetate.</title>
        <authorList>
            <person name="Fukuda S."/>
            <person name="Toh H."/>
            <person name="Hase K."/>
            <person name="Oshima K."/>
            <person name="Nakanishi Y."/>
            <person name="Yoshimura K."/>
            <person name="Tobe T."/>
            <person name="Clarke J.M."/>
            <person name="Topping D.L."/>
            <person name="Suzuki T."/>
            <person name="Taylor T.D."/>
            <person name="Itoh K."/>
            <person name="Kikuchi J."/>
            <person name="Morita H."/>
            <person name="Hattori M."/>
            <person name="Ohno H."/>
        </authorList>
    </citation>
    <scope>NUCLEOTIDE SEQUENCE [LARGE SCALE GENOMIC DNA]</scope>
    <source>
        <strain>ATCC 15697 / DSM 20088 / JCM 1222 / NCTC 11817 / S12</strain>
    </source>
</reference>
<keyword id="KW-0963">Cytoplasm</keyword>
<keyword id="KW-0378">Hydrolase</keyword>
<keyword id="KW-0694">RNA-binding</keyword>
<keyword id="KW-0820">tRNA-binding</keyword>
<dbReference type="EC" id="3.1.1.29" evidence="1"/>
<dbReference type="EMBL" id="CP001095">
    <property type="protein sequence ID" value="ACJ52914.1"/>
    <property type="molecule type" value="Genomic_DNA"/>
</dbReference>
<dbReference type="EMBL" id="AP010889">
    <property type="protein sequence ID" value="BAJ69483.1"/>
    <property type="molecule type" value="Genomic_DNA"/>
</dbReference>
<dbReference type="RefSeq" id="WP_007053586.1">
    <property type="nucleotide sequence ID" value="NZ_JDTT01000009.1"/>
</dbReference>
<dbReference type="SMR" id="B7GTK5"/>
<dbReference type="KEGG" id="bln:Blon_1839"/>
<dbReference type="KEGG" id="blon:BLIJ_1904"/>
<dbReference type="PATRIC" id="fig|391904.8.peg.1911"/>
<dbReference type="HOGENOM" id="CLU_062456_3_1_11"/>
<dbReference type="Proteomes" id="UP000001360">
    <property type="component" value="Chromosome"/>
</dbReference>
<dbReference type="GO" id="GO:0005737">
    <property type="term" value="C:cytoplasm"/>
    <property type="evidence" value="ECO:0007669"/>
    <property type="project" value="UniProtKB-SubCell"/>
</dbReference>
<dbReference type="GO" id="GO:0004045">
    <property type="term" value="F:peptidyl-tRNA hydrolase activity"/>
    <property type="evidence" value="ECO:0007669"/>
    <property type="project" value="UniProtKB-UniRule"/>
</dbReference>
<dbReference type="GO" id="GO:0000049">
    <property type="term" value="F:tRNA binding"/>
    <property type="evidence" value="ECO:0007669"/>
    <property type="project" value="UniProtKB-UniRule"/>
</dbReference>
<dbReference type="GO" id="GO:0006515">
    <property type="term" value="P:protein quality control for misfolded or incompletely synthesized proteins"/>
    <property type="evidence" value="ECO:0007669"/>
    <property type="project" value="UniProtKB-UniRule"/>
</dbReference>
<dbReference type="GO" id="GO:0072344">
    <property type="term" value="P:rescue of stalled ribosome"/>
    <property type="evidence" value="ECO:0007669"/>
    <property type="project" value="UniProtKB-UniRule"/>
</dbReference>
<dbReference type="CDD" id="cd00462">
    <property type="entry name" value="PTH"/>
    <property type="match status" value="1"/>
</dbReference>
<dbReference type="FunFam" id="3.40.50.1470:FF:000001">
    <property type="entry name" value="Peptidyl-tRNA hydrolase"/>
    <property type="match status" value="1"/>
</dbReference>
<dbReference type="Gene3D" id="3.40.50.1470">
    <property type="entry name" value="Peptidyl-tRNA hydrolase"/>
    <property type="match status" value="1"/>
</dbReference>
<dbReference type="HAMAP" id="MF_00083">
    <property type="entry name" value="Pept_tRNA_hydro_bact"/>
    <property type="match status" value="1"/>
</dbReference>
<dbReference type="InterPro" id="IPR001328">
    <property type="entry name" value="Pept_tRNA_hydro"/>
</dbReference>
<dbReference type="InterPro" id="IPR018171">
    <property type="entry name" value="Pept_tRNA_hydro_CS"/>
</dbReference>
<dbReference type="InterPro" id="IPR036416">
    <property type="entry name" value="Pept_tRNA_hydro_sf"/>
</dbReference>
<dbReference type="NCBIfam" id="TIGR00447">
    <property type="entry name" value="pth"/>
    <property type="match status" value="1"/>
</dbReference>
<dbReference type="PANTHER" id="PTHR17224">
    <property type="entry name" value="PEPTIDYL-TRNA HYDROLASE"/>
    <property type="match status" value="1"/>
</dbReference>
<dbReference type="PANTHER" id="PTHR17224:SF1">
    <property type="entry name" value="PEPTIDYL-TRNA HYDROLASE"/>
    <property type="match status" value="1"/>
</dbReference>
<dbReference type="Pfam" id="PF01195">
    <property type="entry name" value="Pept_tRNA_hydro"/>
    <property type="match status" value="1"/>
</dbReference>
<dbReference type="SUPFAM" id="SSF53178">
    <property type="entry name" value="Peptidyl-tRNA hydrolase-like"/>
    <property type="match status" value="1"/>
</dbReference>
<dbReference type="PROSITE" id="PS01195">
    <property type="entry name" value="PEPT_TRNA_HYDROL_1"/>
    <property type="match status" value="1"/>
</dbReference>
<dbReference type="PROSITE" id="PS01196">
    <property type="entry name" value="PEPT_TRNA_HYDROL_2"/>
    <property type="match status" value="1"/>
</dbReference>
<comment type="function">
    <text evidence="1">Hydrolyzes ribosome-free peptidyl-tRNAs (with 1 or more amino acids incorporated), which drop off the ribosome during protein synthesis, or as a result of ribosome stalling.</text>
</comment>
<comment type="function">
    <text evidence="1">Catalyzes the release of premature peptidyl moieties from peptidyl-tRNA molecules trapped in stalled 50S ribosomal subunits, and thus maintains levels of free tRNAs and 50S ribosomes.</text>
</comment>
<comment type="catalytic activity">
    <reaction evidence="1">
        <text>an N-acyl-L-alpha-aminoacyl-tRNA + H2O = an N-acyl-L-amino acid + a tRNA + H(+)</text>
        <dbReference type="Rhea" id="RHEA:54448"/>
        <dbReference type="Rhea" id="RHEA-COMP:10123"/>
        <dbReference type="Rhea" id="RHEA-COMP:13883"/>
        <dbReference type="ChEBI" id="CHEBI:15377"/>
        <dbReference type="ChEBI" id="CHEBI:15378"/>
        <dbReference type="ChEBI" id="CHEBI:59874"/>
        <dbReference type="ChEBI" id="CHEBI:78442"/>
        <dbReference type="ChEBI" id="CHEBI:138191"/>
        <dbReference type="EC" id="3.1.1.29"/>
    </reaction>
</comment>
<comment type="subunit">
    <text evidence="1">Monomer.</text>
</comment>
<comment type="subcellular location">
    <subcellularLocation>
        <location evidence="1">Cytoplasm</location>
    </subcellularLocation>
</comment>
<comment type="similarity">
    <text evidence="1">Belongs to the PTH family.</text>
</comment>
<accession>B7GTK5</accession>
<accession>E8MLQ6</accession>
<proteinExistence type="inferred from homology"/>
<sequence length="199" mass="21752">MASDFWLIAGLGNPGKKYEDTRHNMGFMTADVLAERWTVNFADHKGLAMLGKSVMNLDGRTVKFFLAKPLTYMNDSGNAVASISAYYQIEPDHIVVIHDDMDLEFGRIKVKAGGSAGGHNGIKSIDRSLGTPKYARVRMGVGHSKRGANAHDNTVNWVLGGFGPDQRKQLPEFLADGADAAEDIIFHGLAKTQEKFNGR</sequence>
<gene>
    <name evidence="1" type="primary">pth</name>
    <name type="ordered locus">Blon_1839</name>
    <name type="ordered locus">BLIJ_1904</name>
</gene>
<name>PTH_BIFLS</name>
<evidence type="ECO:0000255" key="1">
    <source>
        <dbReference type="HAMAP-Rule" id="MF_00083"/>
    </source>
</evidence>